<evidence type="ECO:0000255" key="1">
    <source>
        <dbReference type="HAMAP-Rule" id="MF_02002"/>
    </source>
</evidence>
<name>SYI_SERP5</name>
<reference key="1">
    <citation type="submission" date="2007-09" db="EMBL/GenBank/DDBJ databases">
        <title>Complete sequence of chromosome of Serratia proteamaculans 568.</title>
        <authorList>
            <consortium name="US DOE Joint Genome Institute"/>
            <person name="Copeland A."/>
            <person name="Lucas S."/>
            <person name="Lapidus A."/>
            <person name="Barry K."/>
            <person name="Glavina del Rio T."/>
            <person name="Dalin E."/>
            <person name="Tice H."/>
            <person name="Pitluck S."/>
            <person name="Chain P."/>
            <person name="Malfatti S."/>
            <person name="Shin M."/>
            <person name="Vergez L."/>
            <person name="Schmutz J."/>
            <person name="Larimer F."/>
            <person name="Land M."/>
            <person name="Hauser L."/>
            <person name="Kyrpides N."/>
            <person name="Kim E."/>
            <person name="Taghavi S."/>
            <person name="Newman L."/>
            <person name="Vangronsveld J."/>
            <person name="van der Lelie D."/>
            <person name="Richardson P."/>
        </authorList>
    </citation>
    <scope>NUCLEOTIDE SEQUENCE [LARGE SCALE GENOMIC DNA]</scope>
    <source>
        <strain>568</strain>
    </source>
</reference>
<dbReference type="EC" id="6.1.1.5" evidence="1"/>
<dbReference type="EMBL" id="CP000826">
    <property type="protein sequence ID" value="ABV39804.1"/>
    <property type="molecule type" value="Genomic_DNA"/>
</dbReference>
<dbReference type="SMR" id="A8G9L4"/>
<dbReference type="STRING" id="399741.Spro_0698"/>
<dbReference type="KEGG" id="spe:Spro_0698"/>
<dbReference type="eggNOG" id="COG0060">
    <property type="taxonomic scope" value="Bacteria"/>
</dbReference>
<dbReference type="HOGENOM" id="CLU_001493_7_1_6"/>
<dbReference type="OrthoDB" id="9810365at2"/>
<dbReference type="GO" id="GO:0005829">
    <property type="term" value="C:cytosol"/>
    <property type="evidence" value="ECO:0007669"/>
    <property type="project" value="TreeGrafter"/>
</dbReference>
<dbReference type="GO" id="GO:0002161">
    <property type="term" value="F:aminoacyl-tRNA deacylase activity"/>
    <property type="evidence" value="ECO:0007669"/>
    <property type="project" value="InterPro"/>
</dbReference>
<dbReference type="GO" id="GO:0005524">
    <property type="term" value="F:ATP binding"/>
    <property type="evidence" value="ECO:0007669"/>
    <property type="project" value="UniProtKB-UniRule"/>
</dbReference>
<dbReference type="GO" id="GO:0004822">
    <property type="term" value="F:isoleucine-tRNA ligase activity"/>
    <property type="evidence" value="ECO:0007669"/>
    <property type="project" value="UniProtKB-UniRule"/>
</dbReference>
<dbReference type="GO" id="GO:0000049">
    <property type="term" value="F:tRNA binding"/>
    <property type="evidence" value="ECO:0007669"/>
    <property type="project" value="InterPro"/>
</dbReference>
<dbReference type="GO" id="GO:0008270">
    <property type="term" value="F:zinc ion binding"/>
    <property type="evidence" value="ECO:0007669"/>
    <property type="project" value="UniProtKB-UniRule"/>
</dbReference>
<dbReference type="GO" id="GO:0006428">
    <property type="term" value="P:isoleucyl-tRNA aminoacylation"/>
    <property type="evidence" value="ECO:0007669"/>
    <property type="project" value="UniProtKB-UniRule"/>
</dbReference>
<dbReference type="CDD" id="cd07960">
    <property type="entry name" value="Anticodon_Ia_Ile_BEm"/>
    <property type="match status" value="1"/>
</dbReference>
<dbReference type="CDD" id="cd00818">
    <property type="entry name" value="IleRS_core"/>
    <property type="match status" value="1"/>
</dbReference>
<dbReference type="FunFam" id="1.10.730.20:FF:000001">
    <property type="entry name" value="Isoleucine--tRNA ligase"/>
    <property type="match status" value="1"/>
</dbReference>
<dbReference type="FunFam" id="3.40.50.620:FF:000042">
    <property type="entry name" value="Isoleucine--tRNA ligase"/>
    <property type="match status" value="1"/>
</dbReference>
<dbReference type="FunFam" id="3.40.50.620:FF:000048">
    <property type="entry name" value="Isoleucine--tRNA ligase"/>
    <property type="match status" value="1"/>
</dbReference>
<dbReference type="FunFam" id="3.90.740.10:FF:000002">
    <property type="entry name" value="Isoleucine--tRNA ligase"/>
    <property type="match status" value="1"/>
</dbReference>
<dbReference type="Gene3D" id="1.10.730.20">
    <property type="match status" value="1"/>
</dbReference>
<dbReference type="Gene3D" id="3.40.50.620">
    <property type="entry name" value="HUPs"/>
    <property type="match status" value="2"/>
</dbReference>
<dbReference type="Gene3D" id="3.90.740.10">
    <property type="entry name" value="Valyl/Leucyl/Isoleucyl-tRNA synthetase, editing domain"/>
    <property type="match status" value="1"/>
</dbReference>
<dbReference type="HAMAP" id="MF_02002">
    <property type="entry name" value="Ile_tRNA_synth_type1"/>
    <property type="match status" value="1"/>
</dbReference>
<dbReference type="InterPro" id="IPR001412">
    <property type="entry name" value="aa-tRNA-synth_I_CS"/>
</dbReference>
<dbReference type="InterPro" id="IPR002300">
    <property type="entry name" value="aa-tRNA-synth_Ia"/>
</dbReference>
<dbReference type="InterPro" id="IPR033708">
    <property type="entry name" value="Anticodon_Ile_BEm"/>
</dbReference>
<dbReference type="InterPro" id="IPR002301">
    <property type="entry name" value="Ile-tRNA-ligase"/>
</dbReference>
<dbReference type="InterPro" id="IPR023585">
    <property type="entry name" value="Ile-tRNA-ligase_type1"/>
</dbReference>
<dbReference type="InterPro" id="IPR050081">
    <property type="entry name" value="Ile-tRNA_ligase"/>
</dbReference>
<dbReference type="InterPro" id="IPR013155">
    <property type="entry name" value="M/V/L/I-tRNA-synth_anticd-bd"/>
</dbReference>
<dbReference type="InterPro" id="IPR014729">
    <property type="entry name" value="Rossmann-like_a/b/a_fold"/>
</dbReference>
<dbReference type="InterPro" id="IPR009080">
    <property type="entry name" value="tRNAsynth_Ia_anticodon-bd"/>
</dbReference>
<dbReference type="InterPro" id="IPR009008">
    <property type="entry name" value="Val/Leu/Ile-tRNA-synth_edit"/>
</dbReference>
<dbReference type="InterPro" id="IPR010663">
    <property type="entry name" value="Znf_FPG/IleRS"/>
</dbReference>
<dbReference type="NCBIfam" id="TIGR00392">
    <property type="entry name" value="ileS"/>
    <property type="match status" value="1"/>
</dbReference>
<dbReference type="PANTHER" id="PTHR42765:SF1">
    <property type="entry name" value="ISOLEUCINE--TRNA LIGASE, MITOCHONDRIAL"/>
    <property type="match status" value="1"/>
</dbReference>
<dbReference type="PANTHER" id="PTHR42765">
    <property type="entry name" value="SOLEUCYL-TRNA SYNTHETASE"/>
    <property type="match status" value="1"/>
</dbReference>
<dbReference type="Pfam" id="PF08264">
    <property type="entry name" value="Anticodon_1"/>
    <property type="match status" value="1"/>
</dbReference>
<dbReference type="Pfam" id="PF00133">
    <property type="entry name" value="tRNA-synt_1"/>
    <property type="match status" value="1"/>
</dbReference>
<dbReference type="Pfam" id="PF06827">
    <property type="entry name" value="zf-FPG_IleRS"/>
    <property type="match status" value="1"/>
</dbReference>
<dbReference type="PRINTS" id="PR00984">
    <property type="entry name" value="TRNASYNTHILE"/>
</dbReference>
<dbReference type="SUPFAM" id="SSF47323">
    <property type="entry name" value="Anticodon-binding domain of a subclass of class I aminoacyl-tRNA synthetases"/>
    <property type="match status" value="1"/>
</dbReference>
<dbReference type="SUPFAM" id="SSF52374">
    <property type="entry name" value="Nucleotidylyl transferase"/>
    <property type="match status" value="1"/>
</dbReference>
<dbReference type="SUPFAM" id="SSF50677">
    <property type="entry name" value="ValRS/IleRS/LeuRS editing domain"/>
    <property type="match status" value="1"/>
</dbReference>
<dbReference type="PROSITE" id="PS00178">
    <property type="entry name" value="AA_TRNA_LIGASE_I"/>
    <property type="match status" value="1"/>
</dbReference>
<keyword id="KW-0030">Aminoacyl-tRNA synthetase</keyword>
<keyword id="KW-0067">ATP-binding</keyword>
<keyword id="KW-0963">Cytoplasm</keyword>
<keyword id="KW-0436">Ligase</keyword>
<keyword id="KW-0479">Metal-binding</keyword>
<keyword id="KW-0547">Nucleotide-binding</keyword>
<keyword id="KW-0648">Protein biosynthesis</keyword>
<keyword id="KW-0862">Zinc</keyword>
<feature type="chain" id="PRO_1000070891" description="Isoleucine--tRNA ligase">
    <location>
        <begin position="1"/>
        <end position="938"/>
    </location>
</feature>
<feature type="short sequence motif" description="'HIGH' region">
    <location>
        <begin position="58"/>
        <end position="68"/>
    </location>
</feature>
<feature type="short sequence motif" description="'KMSKS' region">
    <location>
        <begin position="602"/>
        <end position="606"/>
    </location>
</feature>
<feature type="binding site" evidence="1">
    <location>
        <position position="561"/>
    </location>
    <ligand>
        <name>L-isoleucyl-5'-AMP</name>
        <dbReference type="ChEBI" id="CHEBI:178002"/>
    </ligand>
</feature>
<feature type="binding site" evidence="1">
    <location>
        <position position="605"/>
    </location>
    <ligand>
        <name>ATP</name>
        <dbReference type="ChEBI" id="CHEBI:30616"/>
    </ligand>
</feature>
<feature type="binding site" evidence="1">
    <location>
        <position position="901"/>
    </location>
    <ligand>
        <name>Zn(2+)</name>
        <dbReference type="ChEBI" id="CHEBI:29105"/>
    </ligand>
</feature>
<feature type="binding site" evidence="1">
    <location>
        <position position="904"/>
    </location>
    <ligand>
        <name>Zn(2+)</name>
        <dbReference type="ChEBI" id="CHEBI:29105"/>
    </ligand>
</feature>
<feature type="binding site" evidence="1">
    <location>
        <position position="921"/>
    </location>
    <ligand>
        <name>Zn(2+)</name>
        <dbReference type="ChEBI" id="CHEBI:29105"/>
    </ligand>
</feature>
<feature type="binding site" evidence="1">
    <location>
        <position position="924"/>
    </location>
    <ligand>
        <name>Zn(2+)</name>
        <dbReference type="ChEBI" id="CHEBI:29105"/>
    </ligand>
</feature>
<proteinExistence type="inferred from homology"/>
<sequence length="938" mass="104735">MSDYKNTLNLPETGFPMRGDLAKREPGMLQRWYEQDLYGMIRTAKKGKKSFILHDGPPYANGSIHIGHSVNKILKDIIIKSKGMSGFDSPYIPGWDCHGLPIELKVEQLYGKPGEKLTAAEFRIKCREYAAEQVEGQKKDFIRLGVLGDWDRPYLTMDFKTEANIIRALGKIISNGHLLKGAKPVHWCTDCRSSLAEAEVEYYDKTSPSIDVAFHAVDAAAVATKFGVTRFNGPVSLVIWTTTPWTLPANRAISLHPEFAYQLVQVEGQCLILAAELVESVMKRAGITHWEVLGSCKGADLELMRFEHPFMGFDVPAIMGEHVTLDAGTGAVHTAGGHGPDDFVISQKYGLEIANPVGPNGCYLTGTHPLLDGKFVFKANDLIVDLLREKDALLHVEKLVHSYPCCWRHKTPIIFRATPQWFISMDQKGLRKQSLEEIKGVQWIPEWGQARIETMVANRPDWCISRQRTWGVPMSLFVHKDTEQLHPRSVELMEEVAKRVEQDGIQAWWDLDAADILGADAADYVKVPDTLDVWFDSGSTHSSVVDVRPEFNGHGADMYLEGSDQHRGWFMSSLMISTAMKGKAPYKEVLTHGFTVDGQGRKMSKSIGNTISPQDVMNKLGGDILRLWVASTDYTGEIAVSDEILKRSADSYRRIRNTARFLLANLNGFEPSTDCVAPEEMVVLDRWAVGRALAAQQDIEKAYANYDFHEVVQRLMQFCSVEMGSFYLDIIKDRQYTAKSDSVARRSCQTALFHIAEALVRWMAPIMSFTADEIWAFLPGKRAQYVFTEEWYDGLFGLAEGEGMNDSFWAELLKVRGEVNKVLEQARADKRLGGSLEAAVTLYADSELAERLNSLQDELRFVLLTSGARVAPLADAPADAQAAELVKGLKIAFSTAEGEKCPRCWHYTTDIGLVAEHADLCGRCVVNVAGDGEKRKFA</sequence>
<accession>A8G9L4</accession>
<comment type="function">
    <text evidence="1">Catalyzes the attachment of isoleucine to tRNA(Ile). As IleRS can inadvertently accommodate and process structurally similar amino acids such as valine, to avoid such errors it has two additional distinct tRNA(Ile)-dependent editing activities. One activity is designated as 'pretransfer' editing and involves the hydrolysis of activated Val-AMP. The other activity is designated 'posttransfer' editing and involves deacylation of mischarged Val-tRNA(Ile).</text>
</comment>
<comment type="catalytic activity">
    <reaction evidence="1">
        <text>tRNA(Ile) + L-isoleucine + ATP = L-isoleucyl-tRNA(Ile) + AMP + diphosphate</text>
        <dbReference type="Rhea" id="RHEA:11060"/>
        <dbReference type="Rhea" id="RHEA-COMP:9666"/>
        <dbReference type="Rhea" id="RHEA-COMP:9695"/>
        <dbReference type="ChEBI" id="CHEBI:30616"/>
        <dbReference type="ChEBI" id="CHEBI:33019"/>
        <dbReference type="ChEBI" id="CHEBI:58045"/>
        <dbReference type="ChEBI" id="CHEBI:78442"/>
        <dbReference type="ChEBI" id="CHEBI:78528"/>
        <dbReference type="ChEBI" id="CHEBI:456215"/>
        <dbReference type="EC" id="6.1.1.5"/>
    </reaction>
</comment>
<comment type="cofactor">
    <cofactor evidence="1">
        <name>Zn(2+)</name>
        <dbReference type="ChEBI" id="CHEBI:29105"/>
    </cofactor>
    <text evidence="1">Binds 1 zinc ion per subunit.</text>
</comment>
<comment type="subunit">
    <text evidence="1">Monomer.</text>
</comment>
<comment type="subcellular location">
    <subcellularLocation>
        <location evidence="1">Cytoplasm</location>
    </subcellularLocation>
</comment>
<comment type="domain">
    <text evidence="1">IleRS has two distinct active sites: one for aminoacylation and one for editing. The misactivated valine is translocated from the active site to the editing site, which sterically excludes the correctly activated isoleucine. The single editing site contains two valyl binding pockets, one specific for each substrate (Val-AMP or Val-tRNA(Ile)).</text>
</comment>
<comment type="similarity">
    <text evidence="1">Belongs to the class-I aminoacyl-tRNA synthetase family. IleS type 1 subfamily.</text>
</comment>
<organism>
    <name type="scientific">Serratia proteamaculans (strain 568)</name>
    <dbReference type="NCBI Taxonomy" id="399741"/>
    <lineage>
        <taxon>Bacteria</taxon>
        <taxon>Pseudomonadati</taxon>
        <taxon>Pseudomonadota</taxon>
        <taxon>Gammaproteobacteria</taxon>
        <taxon>Enterobacterales</taxon>
        <taxon>Yersiniaceae</taxon>
        <taxon>Serratia</taxon>
    </lineage>
</organism>
<protein>
    <recommendedName>
        <fullName evidence="1">Isoleucine--tRNA ligase</fullName>
        <ecNumber evidence="1">6.1.1.5</ecNumber>
    </recommendedName>
    <alternativeName>
        <fullName evidence="1">Isoleucyl-tRNA synthetase</fullName>
        <shortName evidence="1">IleRS</shortName>
    </alternativeName>
</protein>
<gene>
    <name evidence="1" type="primary">ileS</name>
    <name type="ordered locus">Spro_0698</name>
</gene>